<proteinExistence type="inferred from homology"/>
<sequence>MSIKSDKWIRRMAQEHGMIEPFVERQVRGEQDNRVISFGVSSYGYDVRCADEFKVFTNINSATVDPKNFDAGSFVDIKSDVCIIPPNSFALARTVEYFRIPRDVLTICLGKSTYARCGIIVNVTPLEPEWEGHVTLEFSNTTTLPAKIYANEGVAQMLFLQSDEECEVSYKDRGGKYQGQRGVTLPRT</sequence>
<reference key="1">
    <citation type="journal article" date="2002" name="Environ. Microbiol.">
        <title>Complete genome sequence and comparative analysis of the metabolically versatile Pseudomonas putida KT2440.</title>
        <authorList>
            <person name="Nelson K.E."/>
            <person name="Weinel C."/>
            <person name="Paulsen I.T."/>
            <person name="Dodson R.J."/>
            <person name="Hilbert H."/>
            <person name="Martins dos Santos V.A.P."/>
            <person name="Fouts D.E."/>
            <person name="Gill S.R."/>
            <person name="Pop M."/>
            <person name="Holmes M."/>
            <person name="Brinkac L.M."/>
            <person name="Beanan M.J."/>
            <person name="DeBoy R.T."/>
            <person name="Daugherty S.C."/>
            <person name="Kolonay J.F."/>
            <person name="Madupu R."/>
            <person name="Nelson W.C."/>
            <person name="White O."/>
            <person name="Peterson J.D."/>
            <person name="Khouri H.M."/>
            <person name="Hance I."/>
            <person name="Chris Lee P."/>
            <person name="Holtzapple E.K."/>
            <person name="Scanlan D."/>
            <person name="Tran K."/>
            <person name="Moazzez A."/>
            <person name="Utterback T.R."/>
            <person name="Rizzo M."/>
            <person name="Lee K."/>
            <person name="Kosack D."/>
            <person name="Moestl D."/>
            <person name="Wedler H."/>
            <person name="Lauber J."/>
            <person name="Stjepandic D."/>
            <person name="Hoheisel J."/>
            <person name="Straetz M."/>
            <person name="Heim S."/>
            <person name="Kiewitz C."/>
            <person name="Eisen J.A."/>
            <person name="Timmis K.N."/>
            <person name="Duesterhoeft A."/>
            <person name="Tuemmler B."/>
            <person name="Fraser C.M."/>
        </authorList>
    </citation>
    <scope>NUCLEOTIDE SEQUENCE [LARGE SCALE GENOMIC DNA]</scope>
    <source>
        <strain>ATCC 47054 / DSM 6125 / CFBP 8728 / NCIMB 11950 / KT2440</strain>
    </source>
</reference>
<keyword id="KW-0378">Hydrolase</keyword>
<keyword id="KW-0546">Nucleotide metabolism</keyword>
<keyword id="KW-0547">Nucleotide-binding</keyword>
<keyword id="KW-1185">Reference proteome</keyword>
<feature type="chain" id="PRO_0000156004" description="dCTP deaminase">
    <location>
        <begin position="1"/>
        <end position="188"/>
    </location>
</feature>
<feature type="active site" description="Proton donor/acceptor" evidence="1">
    <location>
        <position position="137"/>
    </location>
</feature>
<feature type="binding site" evidence="1">
    <location>
        <begin position="111"/>
        <end position="116"/>
    </location>
    <ligand>
        <name>dCTP</name>
        <dbReference type="ChEBI" id="CHEBI:61481"/>
    </ligand>
</feature>
<feature type="binding site" evidence="1">
    <location>
        <begin position="135"/>
        <end position="137"/>
    </location>
    <ligand>
        <name>dCTP</name>
        <dbReference type="ChEBI" id="CHEBI:61481"/>
    </ligand>
</feature>
<feature type="binding site" evidence="1">
    <location>
        <position position="156"/>
    </location>
    <ligand>
        <name>dCTP</name>
        <dbReference type="ChEBI" id="CHEBI:61481"/>
    </ligand>
</feature>
<feature type="binding site" evidence="1">
    <location>
        <position position="170"/>
    </location>
    <ligand>
        <name>dCTP</name>
        <dbReference type="ChEBI" id="CHEBI:61481"/>
    </ligand>
</feature>
<feature type="binding site" evidence="1">
    <location>
        <position position="180"/>
    </location>
    <ligand>
        <name>dCTP</name>
        <dbReference type="ChEBI" id="CHEBI:61481"/>
    </ligand>
</feature>
<dbReference type="EC" id="3.5.4.13" evidence="1"/>
<dbReference type="EMBL" id="AE015451">
    <property type="protein sequence ID" value="AAN66725.1"/>
    <property type="molecule type" value="Genomic_DNA"/>
</dbReference>
<dbReference type="RefSeq" id="NP_743261.1">
    <property type="nucleotide sequence ID" value="NC_002947.4"/>
</dbReference>
<dbReference type="RefSeq" id="WP_003254920.1">
    <property type="nucleotide sequence ID" value="NZ_CP169744.1"/>
</dbReference>
<dbReference type="SMR" id="Q88NV4"/>
<dbReference type="STRING" id="160488.PP_1100"/>
<dbReference type="PaxDb" id="160488-PP_1100"/>
<dbReference type="GeneID" id="83678452"/>
<dbReference type="KEGG" id="ppu:PP_1100"/>
<dbReference type="PATRIC" id="fig|160488.4.peg.1167"/>
<dbReference type="eggNOG" id="COG0717">
    <property type="taxonomic scope" value="Bacteria"/>
</dbReference>
<dbReference type="HOGENOM" id="CLU_087476_4_0_6"/>
<dbReference type="OrthoDB" id="9780956at2"/>
<dbReference type="PhylomeDB" id="Q88NV4"/>
<dbReference type="BioCyc" id="PPUT160488:G1G01-1174-MONOMER"/>
<dbReference type="UniPathway" id="UPA00610">
    <property type="reaction ID" value="UER00665"/>
</dbReference>
<dbReference type="Proteomes" id="UP000000556">
    <property type="component" value="Chromosome"/>
</dbReference>
<dbReference type="GO" id="GO:0008829">
    <property type="term" value="F:dCTP deaminase activity"/>
    <property type="evidence" value="ECO:0007669"/>
    <property type="project" value="UniProtKB-UniRule"/>
</dbReference>
<dbReference type="GO" id="GO:0000166">
    <property type="term" value="F:nucleotide binding"/>
    <property type="evidence" value="ECO:0007669"/>
    <property type="project" value="UniProtKB-KW"/>
</dbReference>
<dbReference type="GO" id="GO:0006226">
    <property type="term" value="P:dUMP biosynthetic process"/>
    <property type="evidence" value="ECO:0007669"/>
    <property type="project" value="UniProtKB-UniPathway"/>
</dbReference>
<dbReference type="GO" id="GO:0006229">
    <property type="term" value="P:dUTP biosynthetic process"/>
    <property type="evidence" value="ECO:0007669"/>
    <property type="project" value="UniProtKB-UniRule"/>
</dbReference>
<dbReference type="GO" id="GO:0015949">
    <property type="term" value="P:nucleobase-containing small molecule interconversion"/>
    <property type="evidence" value="ECO:0007669"/>
    <property type="project" value="TreeGrafter"/>
</dbReference>
<dbReference type="CDD" id="cd07557">
    <property type="entry name" value="trimeric_dUTPase"/>
    <property type="match status" value="1"/>
</dbReference>
<dbReference type="FunFam" id="2.70.40.10:FF:000001">
    <property type="entry name" value="dCTP deaminase"/>
    <property type="match status" value="1"/>
</dbReference>
<dbReference type="Gene3D" id="2.70.40.10">
    <property type="match status" value="1"/>
</dbReference>
<dbReference type="HAMAP" id="MF_00146">
    <property type="entry name" value="dCTP_deaminase"/>
    <property type="match status" value="1"/>
</dbReference>
<dbReference type="InterPro" id="IPR011962">
    <property type="entry name" value="dCTP_deaminase"/>
</dbReference>
<dbReference type="InterPro" id="IPR036157">
    <property type="entry name" value="dUTPase-like_sf"/>
</dbReference>
<dbReference type="InterPro" id="IPR033704">
    <property type="entry name" value="dUTPase_trimeric"/>
</dbReference>
<dbReference type="NCBIfam" id="TIGR02274">
    <property type="entry name" value="dCTP_deam"/>
    <property type="match status" value="1"/>
</dbReference>
<dbReference type="PANTHER" id="PTHR42680">
    <property type="entry name" value="DCTP DEAMINASE"/>
    <property type="match status" value="1"/>
</dbReference>
<dbReference type="PANTHER" id="PTHR42680:SF3">
    <property type="entry name" value="DCTP DEAMINASE"/>
    <property type="match status" value="1"/>
</dbReference>
<dbReference type="Pfam" id="PF22769">
    <property type="entry name" value="DCD"/>
    <property type="match status" value="1"/>
</dbReference>
<dbReference type="SUPFAM" id="SSF51283">
    <property type="entry name" value="dUTPase-like"/>
    <property type="match status" value="1"/>
</dbReference>
<gene>
    <name evidence="1" type="primary">dcd</name>
    <name type="ordered locus">PP_1100</name>
</gene>
<organism>
    <name type="scientific">Pseudomonas putida (strain ATCC 47054 / DSM 6125 / CFBP 8728 / NCIMB 11950 / KT2440)</name>
    <dbReference type="NCBI Taxonomy" id="160488"/>
    <lineage>
        <taxon>Bacteria</taxon>
        <taxon>Pseudomonadati</taxon>
        <taxon>Pseudomonadota</taxon>
        <taxon>Gammaproteobacteria</taxon>
        <taxon>Pseudomonadales</taxon>
        <taxon>Pseudomonadaceae</taxon>
        <taxon>Pseudomonas</taxon>
    </lineage>
</organism>
<accession>Q88NV4</accession>
<comment type="function">
    <text evidence="1">Catalyzes the deamination of dCTP to dUTP.</text>
</comment>
<comment type="catalytic activity">
    <reaction evidence="1">
        <text>dCTP + H2O + H(+) = dUTP + NH4(+)</text>
        <dbReference type="Rhea" id="RHEA:22680"/>
        <dbReference type="ChEBI" id="CHEBI:15377"/>
        <dbReference type="ChEBI" id="CHEBI:15378"/>
        <dbReference type="ChEBI" id="CHEBI:28938"/>
        <dbReference type="ChEBI" id="CHEBI:61481"/>
        <dbReference type="ChEBI" id="CHEBI:61555"/>
        <dbReference type="EC" id="3.5.4.13"/>
    </reaction>
</comment>
<comment type="pathway">
    <text evidence="1">Pyrimidine metabolism; dUMP biosynthesis; dUMP from dCTP (dUTP route): step 1/2.</text>
</comment>
<comment type="subunit">
    <text evidence="1">Homotrimer.</text>
</comment>
<comment type="similarity">
    <text evidence="1">Belongs to the dCTP deaminase family.</text>
</comment>
<name>DCD_PSEPK</name>
<protein>
    <recommendedName>
        <fullName evidence="1">dCTP deaminase</fullName>
        <ecNumber evidence="1">3.5.4.13</ecNumber>
    </recommendedName>
    <alternativeName>
        <fullName evidence="1">Deoxycytidine triphosphate deaminase</fullName>
    </alternativeName>
</protein>
<evidence type="ECO:0000255" key="1">
    <source>
        <dbReference type="HAMAP-Rule" id="MF_00146"/>
    </source>
</evidence>